<accession>A9INV9</accession>
<gene>
    <name evidence="1" type="primary">tsf</name>
    <name type="ordered locus">Bpet2534</name>
</gene>
<feature type="chain" id="PRO_1000116698" description="Elongation factor Ts">
    <location>
        <begin position="1"/>
        <end position="292"/>
    </location>
</feature>
<feature type="region of interest" description="Involved in Mg(2+) ion dislocation from EF-Tu" evidence="1">
    <location>
        <begin position="82"/>
        <end position="85"/>
    </location>
</feature>
<keyword id="KW-0963">Cytoplasm</keyword>
<keyword id="KW-0251">Elongation factor</keyword>
<keyword id="KW-0648">Protein biosynthesis</keyword>
<dbReference type="EMBL" id="AM902716">
    <property type="protein sequence ID" value="CAP42876.1"/>
    <property type="molecule type" value="Genomic_DNA"/>
</dbReference>
<dbReference type="SMR" id="A9INV9"/>
<dbReference type="STRING" id="94624.Bpet2534"/>
<dbReference type="KEGG" id="bpt:Bpet2534"/>
<dbReference type="eggNOG" id="COG0264">
    <property type="taxonomic scope" value="Bacteria"/>
</dbReference>
<dbReference type="Proteomes" id="UP000001225">
    <property type="component" value="Chromosome"/>
</dbReference>
<dbReference type="GO" id="GO:0005737">
    <property type="term" value="C:cytoplasm"/>
    <property type="evidence" value="ECO:0007669"/>
    <property type="project" value="UniProtKB-SubCell"/>
</dbReference>
<dbReference type="GO" id="GO:0003746">
    <property type="term" value="F:translation elongation factor activity"/>
    <property type="evidence" value="ECO:0007669"/>
    <property type="project" value="UniProtKB-UniRule"/>
</dbReference>
<dbReference type="CDD" id="cd14275">
    <property type="entry name" value="UBA_EF-Ts"/>
    <property type="match status" value="1"/>
</dbReference>
<dbReference type="FunFam" id="1.10.286.20:FF:000001">
    <property type="entry name" value="Elongation factor Ts"/>
    <property type="match status" value="1"/>
</dbReference>
<dbReference type="FunFam" id="1.10.8.10:FF:000001">
    <property type="entry name" value="Elongation factor Ts"/>
    <property type="match status" value="1"/>
</dbReference>
<dbReference type="Gene3D" id="1.10.286.20">
    <property type="match status" value="1"/>
</dbReference>
<dbReference type="Gene3D" id="1.10.8.10">
    <property type="entry name" value="DNA helicase RuvA subunit, C-terminal domain"/>
    <property type="match status" value="1"/>
</dbReference>
<dbReference type="Gene3D" id="3.30.479.20">
    <property type="entry name" value="Elongation factor Ts, dimerisation domain"/>
    <property type="match status" value="2"/>
</dbReference>
<dbReference type="HAMAP" id="MF_00050">
    <property type="entry name" value="EF_Ts"/>
    <property type="match status" value="1"/>
</dbReference>
<dbReference type="InterPro" id="IPR036402">
    <property type="entry name" value="EF-Ts_dimer_sf"/>
</dbReference>
<dbReference type="InterPro" id="IPR001816">
    <property type="entry name" value="Transl_elong_EFTs/EF1B"/>
</dbReference>
<dbReference type="InterPro" id="IPR014039">
    <property type="entry name" value="Transl_elong_EFTs/EF1B_dimer"/>
</dbReference>
<dbReference type="InterPro" id="IPR018101">
    <property type="entry name" value="Transl_elong_Ts_CS"/>
</dbReference>
<dbReference type="InterPro" id="IPR009060">
    <property type="entry name" value="UBA-like_sf"/>
</dbReference>
<dbReference type="NCBIfam" id="TIGR00116">
    <property type="entry name" value="tsf"/>
    <property type="match status" value="1"/>
</dbReference>
<dbReference type="PANTHER" id="PTHR11741">
    <property type="entry name" value="ELONGATION FACTOR TS"/>
    <property type="match status" value="1"/>
</dbReference>
<dbReference type="PANTHER" id="PTHR11741:SF0">
    <property type="entry name" value="ELONGATION FACTOR TS, MITOCHONDRIAL"/>
    <property type="match status" value="1"/>
</dbReference>
<dbReference type="Pfam" id="PF00889">
    <property type="entry name" value="EF_TS"/>
    <property type="match status" value="1"/>
</dbReference>
<dbReference type="SUPFAM" id="SSF54713">
    <property type="entry name" value="Elongation factor Ts (EF-Ts), dimerisation domain"/>
    <property type="match status" value="2"/>
</dbReference>
<dbReference type="SUPFAM" id="SSF46934">
    <property type="entry name" value="UBA-like"/>
    <property type="match status" value="1"/>
</dbReference>
<dbReference type="PROSITE" id="PS01127">
    <property type="entry name" value="EF_TS_2"/>
    <property type="match status" value="1"/>
</dbReference>
<comment type="function">
    <text evidence="1">Associates with the EF-Tu.GDP complex and induces the exchange of GDP to GTP. It remains bound to the aminoacyl-tRNA.EF-Tu.GTP complex up to the GTP hydrolysis stage on the ribosome.</text>
</comment>
<comment type="subcellular location">
    <subcellularLocation>
        <location evidence="1">Cytoplasm</location>
    </subcellularLocation>
</comment>
<comment type="similarity">
    <text evidence="1">Belongs to the EF-Ts family.</text>
</comment>
<organism>
    <name type="scientific">Bordetella petrii (strain ATCC BAA-461 / DSM 12804 / CCUG 43448)</name>
    <dbReference type="NCBI Taxonomy" id="340100"/>
    <lineage>
        <taxon>Bacteria</taxon>
        <taxon>Pseudomonadati</taxon>
        <taxon>Pseudomonadota</taxon>
        <taxon>Betaproteobacteria</taxon>
        <taxon>Burkholderiales</taxon>
        <taxon>Alcaligenaceae</taxon>
        <taxon>Bordetella</taxon>
    </lineage>
</organism>
<name>EFTS_BORPD</name>
<protein>
    <recommendedName>
        <fullName evidence="1">Elongation factor Ts</fullName>
        <shortName evidence="1">EF-Ts</shortName>
    </recommendedName>
</protein>
<proteinExistence type="inferred from homology"/>
<evidence type="ECO:0000255" key="1">
    <source>
        <dbReference type="HAMAP-Rule" id="MF_00050"/>
    </source>
</evidence>
<reference key="1">
    <citation type="journal article" date="2008" name="BMC Genomics">
        <title>The missing link: Bordetella petrii is endowed with both the metabolic versatility of environmental bacteria and virulence traits of pathogenic Bordetellae.</title>
        <authorList>
            <person name="Gross R."/>
            <person name="Guzman C.A."/>
            <person name="Sebaihia M."/>
            <person name="Martin dos Santos V.A.P."/>
            <person name="Pieper D.H."/>
            <person name="Koebnik R."/>
            <person name="Lechner M."/>
            <person name="Bartels D."/>
            <person name="Buhrmester J."/>
            <person name="Choudhuri J.V."/>
            <person name="Ebensen T."/>
            <person name="Gaigalat L."/>
            <person name="Herrmann S."/>
            <person name="Khachane A.N."/>
            <person name="Larisch C."/>
            <person name="Link S."/>
            <person name="Linke B."/>
            <person name="Meyer F."/>
            <person name="Mormann S."/>
            <person name="Nakunst D."/>
            <person name="Rueckert C."/>
            <person name="Schneiker-Bekel S."/>
            <person name="Schulze K."/>
            <person name="Voerholter F.-J."/>
            <person name="Yevsa T."/>
            <person name="Engle J.T."/>
            <person name="Goldman W.E."/>
            <person name="Puehler A."/>
            <person name="Goebel U.B."/>
            <person name="Goesmann A."/>
            <person name="Bloecker H."/>
            <person name="Kaiser O."/>
            <person name="Martinez-Arias R."/>
        </authorList>
    </citation>
    <scope>NUCLEOTIDE SEQUENCE [LARGE SCALE GENOMIC DNA]</scope>
    <source>
        <strain>ATCC BAA-461 / DSM 12804 / CCUG 43448</strain>
    </source>
</reference>
<sequence>MAEITAALVKELREKTDAPMMECKKALTEAEGDLARAEEILRVKLGNKASKAAARVTAEGLIGLYISADAKQGAVIEVNCETDFVAKNDDFVAFVNKLAELVTTQKPADVAALSALPLGEGTVETTRTALVGKIGENISVRRFERIETANALASYVHGGKIGVLVEYAGAEEVGKDLAMHIAATKPRALNADGVPAADIAAERSVAEQKAAESGKPAEIVAKMVEGSVQKFLKEVTLLSQPFVKNDKQTVEQMLKEKSASINKFVLFVVGEGIEKKTSDFAAEVAAAAAGRA</sequence>